<evidence type="ECO:0000255" key="1">
    <source>
        <dbReference type="HAMAP-Rule" id="MF_00523"/>
    </source>
</evidence>
<proteinExistence type="inferred from homology"/>
<reference key="1">
    <citation type="journal article" date="2005" name="J. Bacteriol.">
        <title>Completion of the genome sequence of Brucella abortus and comparison to the highly similar genomes of Brucella melitensis and Brucella suis.</title>
        <authorList>
            <person name="Halling S.M."/>
            <person name="Peterson-Burch B.D."/>
            <person name="Bricker B.J."/>
            <person name="Zuerner R.L."/>
            <person name="Qing Z."/>
            <person name="Li L.-L."/>
            <person name="Kapur V."/>
            <person name="Alt D.P."/>
            <person name="Olsen S.C."/>
        </authorList>
    </citation>
    <scope>NUCLEOTIDE SEQUENCE [LARGE SCALE GENOMIC DNA]</scope>
    <source>
        <strain>9-941</strain>
    </source>
</reference>
<protein>
    <recommendedName>
        <fullName evidence="1">UDP-3-O-acylglucosamine N-acyltransferase</fullName>
        <ecNumber evidence="1">2.3.1.191</ecNumber>
    </recommendedName>
</protein>
<sequence>MADPIFFKPSRELTIGDVADFTGASLRDPKLAPRSVERLASLKDAGEGALVFVEGKKNVSSLVGLKAAGVLCTESLADSVPSGIAVLVSRHPHRDFSAVGRMLFPASVRPESWLGETGISPAAFIHPTAQIEDGATVEAGAVIGSGVTIGAGTLIAATAVIGQNCQIGRNSYIAPGVSVQCAFIGNNVSLHPGVRIGQDGFGYVPGAAGLDKVPQLGRVIIQDNVEIGANTTVDRGSLDDTVIGEGTKIDNLVQIAHNVRIGRFCLVAAHCGISGSCVIGDQTMLGGRVGLADHLIIGSRVQVAAASGVMNDIPDGERWGGIPARPIKQWFRDIANIRSIGQSRKDASSDE</sequence>
<accession>P0C111</accession>
<accession>P0A3P6</accession>
<accession>Q44630</accession>
<accession>Q57CY6</accession>
<name>LPXD_BRUAB</name>
<feature type="chain" id="PRO_0000059652" description="UDP-3-O-acylglucosamine N-acyltransferase">
    <location>
        <begin position="1"/>
        <end position="351"/>
    </location>
</feature>
<feature type="active site" description="Proton acceptor" evidence="1">
    <location>
        <position position="257"/>
    </location>
</feature>
<keyword id="KW-0012">Acyltransferase</keyword>
<keyword id="KW-0441">Lipid A biosynthesis</keyword>
<keyword id="KW-0444">Lipid biosynthesis</keyword>
<keyword id="KW-0443">Lipid metabolism</keyword>
<keyword id="KW-0677">Repeat</keyword>
<keyword id="KW-0808">Transferase</keyword>
<gene>
    <name evidence="1" type="primary">lpxD</name>
    <name type="ordered locus">BruAb1_1159</name>
</gene>
<organism>
    <name type="scientific">Brucella abortus biovar 1 (strain 9-941)</name>
    <dbReference type="NCBI Taxonomy" id="262698"/>
    <lineage>
        <taxon>Bacteria</taxon>
        <taxon>Pseudomonadati</taxon>
        <taxon>Pseudomonadota</taxon>
        <taxon>Alphaproteobacteria</taxon>
        <taxon>Hyphomicrobiales</taxon>
        <taxon>Brucellaceae</taxon>
        <taxon>Brucella/Ochrobactrum group</taxon>
        <taxon>Brucella</taxon>
    </lineage>
</organism>
<comment type="function">
    <text evidence="1">Catalyzes the N-acylation of UDP-3-O-acylglucosamine using 3-hydroxyacyl-ACP as the acyl donor. Is involved in the biosynthesis of lipid A, a phosphorylated glycolipid that anchors the lipopolysaccharide to the outer membrane of the cell.</text>
</comment>
<comment type="catalytic activity">
    <reaction evidence="1">
        <text>a UDP-3-O-[(3R)-3-hydroxyacyl]-alpha-D-glucosamine + a (3R)-hydroxyacyl-[ACP] = a UDP-2-N,3-O-bis[(3R)-3-hydroxyacyl]-alpha-D-glucosamine + holo-[ACP] + H(+)</text>
        <dbReference type="Rhea" id="RHEA:53836"/>
        <dbReference type="Rhea" id="RHEA-COMP:9685"/>
        <dbReference type="Rhea" id="RHEA-COMP:9945"/>
        <dbReference type="ChEBI" id="CHEBI:15378"/>
        <dbReference type="ChEBI" id="CHEBI:64479"/>
        <dbReference type="ChEBI" id="CHEBI:78827"/>
        <dbReference type="ChEBI" id="CHEBI:137740"/>
        <dbReference type="ChEBI" id="CHEBI:137748"/>
        <dbReference type="EC" id="2.3.1.191"/>
    </reaction>
</comment>
<comment type="pathway">
    <text evidence="1">Bacterial outer membrane biogenesis; LPS lipid A biosynthesis.</text>
</comment>
<comment type="subunit">
    <text evidence="1">Homotrimer.</text>
</comment>
<comment type="similarity">
    <text evidence="1">Belongs to the transferase hexapeptide repeat family. LpxD subfamily.</text>
</comment>
<dbReference type="EC" id="2.3.1.191" evidence="1"/>
<dbReference type="EMBL" id="AE017223">
    <property type="protein sequence ID" value="AAX74498.1"/>
    <property type="molecule type" value="Genomic_DNA"/>
</dbReference>
<dbReference type="RefSeq" id="WP_002964281.1">
    <property type="nucleotide sequence ID" value="NC_006932.1"/>
</dbReference>
<dbReference type="SMR" id="P0C111"/>
<dbReference type="EnsemblBacteria" id="AAX74498">
    <property type="protein sequence ID" value="AAX74498"/>
    <property type="gene ID" value="BruAb1_1159"/>
</dbReference>
<dbReference type="GeneID" id="97533596"/>
<dbReference type="KEGG" id="bmb:BruAb1_1159"/>
<dbReference type="HOGENOM" id="CLU_049865_0_2_5"/>
<dbReference type="UniPathway" id="UPA00973"/>
<dbReference type="Proteomes" id="UP000000540">
    <property type="component" value="Chromosome I"/>
</dbReference>
<dbReference type="GO" id="GO:0016020">
    <property type="term" value="C:membrane"/>
    <property type="evidence" value="ECO:0007669"/>
    <property type="project" value="GOC"/>
</dbReference>
<dbReference type="GO" id="GO:0016410">
    <property type="term" value="F:N-acyltransferase activity"/>
    <property type="evidence" value="ECO:0007669"/>
    <property type="project" value="InterPro"/>
</dbReference>
<dbReference type="GO" id="GO:0009245">
    <property type="term" value="P:lipid A biosynthetic process"/>
    <property type="evidence" value="ECO:0007669"/>
    <property type="project" value="UniProtKB-UniRule"/>
</dbReference>
<dbReference type="CDD" id="cd03352">
    <property type="entry name" value="LbH_LpxD"/>
    <property type="match status" value="1"/>
</dbReference>
<dbReference type="Gene3D" id="2.160.10.10">
    <property type="entry name" value="Hexapeptide repeat proteins"/>
    <property type="match status" value="1"/>
</dbReference>
<dbReference type="Gene3D" id="3.40.1390.10">
    <property type="entry name" value="MurE/MurF, N-terminal domain"/>
    <property type="match status" value="1"/>
</dbReference>
<dbReference type="HAMAP" id="MF_00523">
    <property type="entry name" value="LpxD"/>
    <property type="match status" value="1"/>
</dbReference>
<dbReference type="InterPro" id="IPR001451">
    <property type="entry name" value="Hexapep"/>
</dbReference>
<dbReference type="InterPro" id="IPR018357">
    <property type="entry name" value="Hexapep_transf_CS"/>
</dbReference>
<dbReference type="InterPro" id="IPR007691">
    <property type="entry name" value="LpxD"/>
</dbReference>
<dbReference type="InterPro" id="IPR011004">
    <property type="entry name" value="Trimer_LpxA-like_sf"/>
</dbReference>
<dbReference type="InterPro" id="IPR020573">
    <property type="entry name" value="UDP_GlcNAc_AcTrfase_non-rep"/>
</dbReference>
<dbReference type="NCBIfam" id="TIGR01853">
    <property type="entry name" value="lipid_A_lpxD"/>
    <property type="match status" value="1"/>
</dbReference>
<dbReference type="NCBIfam" id="NF002060">
    <property type="entry name" value="PRK00892.1"/>
    <property type="match status" value="1"/>
</dbReference>
<dbReference type="PANTHER" id="PTHR43378">
    <property type="entry name" value="UDP-3-O-ACYLGLUCOSAMINE N-ACYLTRANSFERASE"/>
    <property type="match status" value="1"/>
</dbReference>
<dbReference type="PANTHER" id="PTHR43378:SF2">
    <property type="entry name" value="UDP-3-O-ACYLGLUCOSAMINE N-ACYLTRANSFERASE 1, MITOCHONDRIAL-RELATED"/>
    <property type="match status" value="1"/>
</dbReference>
<dbReference type="Pfam" id="PF00132">
    <property type="entry name" value="Hexapep"/>
    <property type="match status" value="2"/>
</dbReference>
<dbReference type="Pfam" id="PF04613">
    <property type="entry name" value="LpxD"/>
    <property type="match status" value="1"/>
</dbReference>
<dbReference type="SUPFAM" id="SSF51161">
    <property type="entry name" value="Trimeric LpxA-like enzymes"/>
    <property type="match status" value="1"/>
</dbReference>
<dbReference type="PROSITE" id="PS00101">
    <property type="entry name" value="HEXAPEP_TRANSFERASES"/>
    <property type="match status" value="1"/>
</dbReference>